<protein>
    <recommendedName>
        <fullName evidence="1">Large-conductance mechanosensitive channel</fullName>
    </recommendedName>
</protein>
<feature type="chain" id="PRO_1000076032" description="Large-conductance mechanosensitive channel">
    <location>
        <begin position="1"/>
        <end position="132"/>
    </location>
</feature>
<feature type="transmembrane region" description="Helical" evidence="1">
    <location>
        <begin position="8"/>
        <end position="28"/>
    </location>
</feature>
<feature type="transmembrane region" description="Helical" evidence="1">
    <location>
        <begin position="30"/>
        <end position="50"/>
    </location>
</feature>
<feature type="transmembrane region" description="Helical" evidence="1">
    <location>
        <begin position="67"/>
        <end position="87"/>
    </location>
</feature>
<reference key="1">
    <citation type="journal article" date="2008" name="Chem. Biol. Interact.">
        <title>Extending the Bacillus cereus group genomics to putative food-borne pathogens of different toxicity.</title>
        <authorList>
            <person name="Lapidus A."/>
            <person name="Goltsman E."/>
            <person name="Auger S."/>
            <person name="Galleron N."/>
            <person name="Segurens B."/>
            <person name="Dossat C."/>
            <person name="Land M.L."/>
            <person name="Broussolle V."/>
            <person name="Brillard J."/>
            <person name="Guinebretiere M.-H."/>
            <person name="Sanchis V."/>
            <person name="Nguen-the C."/>
            <person name="Lereclus D."/>
            <person name="Richardson P."/>
            <person name="Wincker P."/>
            <person name="Weissenbach J."/>
            <person name="Ehrlich S.D."/>
            <person name="Sorokin A."/>
        </authorList>
    </citation>
    <scope>NUCLEOTIDE SEQUENCE [LARGE SCALE GENOMIC DNA]</scope>
    <source>
        <strain>DSM 22905 / CIP 110041 / 391-98 / NVH 391-98</strain>
    </source>
</reference>
<proteinExistence type="inferred from homology"/>
<accession>A7GTU7</accession>
<dbReference type="EMBL" id="CP000764">
    <property type="protein sequence ID" value="ABS23555.1"/>
    <property type="molecule type" value="Genomic_DNA"/>
</dbReference>
<dbReference type="RefSeq" id="WP_012095799.1">
    <property type="nucleotide sequence ID" value="NC_009674.1"/>
</dbReference>
<dbReference type="SMR" id="A7GTU7"/>
<dbReference type="STRING" id="315749.Bcer98_3340"/>
<dbReference type="GeneID" id="33898581"/>
<dbReference type="KEGG" id="bcy:Bcer98_3340"/>
<dbReference type="eggNOG" id="COG1970">
    <property type="taxonomic scope" value="Bacteria"/>
</dbReference>
<dbReference type="HOGENOM" id="CLU_095787_0_0_9"/>
<dbReference type="OrthoDB" id="9810350at2"/>
<dbReference type="Proteomes" id="UP000002300">
    <property type="component" value="Chromosome"/>
</dbReference>
<dbReference type="GO" id="GO:0005886">
    <property type="term" value="C:plasma membrane"/>
    <property type="evidence" value="ECO:0007669"/>
    <property type="project" value="UniProtKB-SubCell"/>
</dbReference>
<dbReference type="GO" id="GO:0008381">
    <property type="term" value="F:mechanosensitive monoatomic ion channel activity"/>
    <property type="evidence" value="ECO:0007669"/>
    <property type="project" value="UniProtKB-UniRule"/>
</dbReference>
<dbReference type="FunFam" id="1.10.1200.120:FF:000001">
    <property type="entry name" value="Large-conductance mechanosensitive channel"/>
    <property type="match status" value="1"/>
</dbReference>
<dbReference type="Gene3D" id="1.10.1200.120">
    <property type="entry name" value="Large-conductance mechanosensitive channel, MscL, domain 1"/>
    <property type="match status" value="1"/>
</dbReference>
<dbReference type="HAMAP" id="MF_00115">
    <property type="entry name" value="MscL"/>
    <property type="match status" value="1"/>
</dbReference>
<dbReference type="InterPro" id="IPR019823">
    <property type="entry name" value="Mechanosensitive_channel_CS"/>
</dbReference>
<dbReference type="InterPro" id="IPR001185">
    <property type="entry name" value="MS_channel"/>
</dbReference>
<dbReference type="InterPro" id="IPR037673">
    <property type="entry name" value="MSC/AndL"/>
</dbReference>
<dbReference type="InterPro" id="IPR036019">
    <property type="entry name" value="MscL_channel"/>
</dbReference>
<dbReference type="NCBIfam" id="TIGR00220">
    <property type="entry name" value="mscL"/>
    <property type="match status" value="1"/>
</dbReference>
<dbReference type="NCBIfam" id="NF001843">
    <property type="entry name" value="PRK00567.1-4"/>
    <property type="match status" value="1"/>
</dbReference>
<dbReference type="NCBIfam" id="NF010558">
    <property type="entry name" value="PRK13953.1"/>
    <property type="match status" value="1"/>
</dbReference>
<dbReference type="NCBIfam" id="NF010560">
    <property type="entry name" value="PRK13955.1"/>
    <property type="match status" value="1"/>
</dbReference>
<dbReference type="PANTHER" id="PTHR30266:SF2">
    <property type="entry name" value="LARGE-CONDUCTANCE MECHANOSENSITIVE CHANNEL"/>
    <property type="match status" value="1"/>
</dbReference>
<dbReference type="PANTHER" id="PTHR30266">
    <property type="entry name" value="MECHANOSENSITIVE CHANNEL MSCL"/>
    <property type="match status" value="1"/>
</dbReference>
<dbReference type="Pfam" id="PF01741">
    <property type="entry name" value="MscL"/>
    <property type="match status" value="1"/>
</dbReference>
<dbReference type="PRINTS" id="PR01264">
    <property type="entry name" value="MECHCHANNEL"/>
</dbReference>
<dbReference type="SUPFAM" id="SSF81330">
    <property type="entry name" value="Gated mechanosensitive channel"/>
    <property type="match status" value="1"/>
</dbReference>
<dbReference type="PROSITE" id="PS01327">
    <property type="entry name" value="MSCL"/>
    <property type="match status" value="1"/>
</dbReference>
<name>MSCL_BACCN</name>
<gene>
    <name evidence="1" type="primary">mscL</name>
    <name type="ordered locus">Bcer98_3340</name>
</gene>
<sequence>MWNEFKKFALKGNVMDLAVGVVIGGAFGKIVSSLVSDVIMPLVGLLLGGVNFTGLSFTFGKAVVKYGAFIQTVVDFLIIAFSIFLFIKLFNKLTFKKEEEKKEEVPEPTKEEVLLGEIRDLLKQQNASKDRA</sequence>
<evidence type="ECO:0000255" key="1">
    <source>
        <dbReference type="HAMAP-Rule" id="MF_00115"/>
    </source>
</evidence>
<organism>
    <name type="scientific">Bacillus cytotoxicus (strain DSM 22905 / CIP 110041 / 391-98 / NVH 391-98)</name>
    <dbReference type="NCBI Taxonomy" id="315749"/>
    <lineage>
        <taxon>Bacteria</taxon>
        <taxon>Bacillati</taxon>
        <taxon>Bacillota</taxon>
        <taxon>Bacilli</taxon>
        <taxon>Bacillales</taxon>
        <taxon>Bacillaceae</taxon>
        <taxon>Bacillus</taxon>
        <taxon>Bacillus cereus group</taxon>
    </lineage>
</organism>
<keyword id="KW-1003">Cell membrane</keyword>
<keyword id="KW-0407">Ion channel</keyword>
<keyword id="KW-0406">Ion transport</keyword>
<keyword id="KW-0472">Membrane</keyword>
<keyword id="KW-0812">Transmembrane</keyword>
<keyword id="KW-1133">Transmembrane helix</keyword>
<keyword id="KW-0813">Transport</keyword>
<comment type="function">
    <text evidence="1">Channel that opens in response to stretch forces in the membrane lipid bilayer. May participate in the regulation of osmotic pressure changes within the cell.</text>
</comment>
<comment type="subunit">
    <text evidence="1">Homopentamer.</text>
</comment>
<comment type="subcellular location">
    <subcellularLocation>
        <location evidence="1">Cell membrane</location>
        <topology evidence="1">Multi-pass membrane protein</topology>
    </subcellularLocation>
</comment>
<comment type="similarity">
    <text evidence="1">Belongs to the MscL family.</text>
</comment>